<organism>
    <name type="scientific">Aspergillus niger (strain ATCC MYA-4892 / CBS 513.88 / FGSC A1513)</name>
    <dbReference type="NCBI Taxonomy" id="425011"/>
    <lineage>
        <taxon>Eukaryota</taxon>
        <taxon>Fungi</taxon>
        <taxon>Dikarya</taxon>
        <taxon>Ascomycota</taxon>
        <taxon>Pezizomycotina</taxon>
        <taxon>Eurotiomycetes</taxon>
        <taxon>Eurotiomycetidae</taxon>
        <taxon>Eurotiales</taxon>
        <taxon>Aspergillaceae</taxon>
        <taxon>Aspergillus</taxon>
        <taxon>Aspergillus subgen. Circumdati</taxon>
    </lineage>
</organism>
<dbReference type="EC" id="3.1.-.-" evidence="1"/>
<dbReference type="EMBL" id="AM270251">
    <property type="protein sequence ID" value="CAK97128.1"/>
    <property type="molecule type" value="Genomic_DNA"/>
</dbReference>
<dbReference type="RefSeq" id="XP_001395002.1">
    <property type="nucleotide sequence ID" value="XM_001394965.1"/>
</dbReference>
<dbReference type="SMR" id="A5ABU3"/>
<dbReference type="EnsemblFungi" id="CAK97128">
    <property type="protein sequence ID" value="CAK97128"/>
    <property type="gene ID" value="An11g10450"/>
</dbReference>
<dbReference type="GeneID" id="4985262"/>
<dbReference type="KEGG" id="ang:An11g10450"/>
<dbReference type="VEuPathDB" id="FungiDB:An11g10450"/>
<dbReference type="HOGENOM" id="CLU_032444_2_0_1"/>
<dbReference type="Proteomes" id="UP000006706">
    <property type="component" value="Chromosome 7R"/>
</dbReference>
<dbReference type="GO" id="GO:0005739">
    <property type="term" value="C:mitochondrion"/>
    <property type="evidence" value="ECO:0007669"/>
    <property type="project" value="UniProtKB-SubCell"/>
</dbReference>
<dbReference type="GO" id="GO:0005730">
    <property type="term" value="C:nucleolus"/>
    <property type="evidence" value="ECO:0007669"/>
    <property type="project" value="UniProtKB-SubCell"/>
</dbReference>
<dbReference type="GO" id="GO:0005654">
    <property type="term" value="C:nucleoplasm"/>
    <property type="evidence" value="ECO:0007669"/>
    <property type="project" value="UniProtKB-SubCell"/>
</dbReference>
<dbReference type="GO" id="GO:0008409">
    <property type="term" value="F:5'-3' exonuclease activity"/>
    <property type="evidence" value="ECO:0007669"/>
    <property type="project" value="UniProtKB-UniRule"/>
</dbReference>
<dbReference type="GO" id="GO:0017108">
    <property type="term" value="F:5'-flap endonuclease activity"/>
    <property type="evidence" value="ECO:0007669"/>
    <property type="project" value="UniProtKB-UniRule"/>
</dbReference>
<dbReference type="GO" id="GO:0003677">
    <property type="term" value="F:DNA binding"/>
    <property type="evidence" value="ECO:0007669"/>
    <property type="project" value="UniProtKB-UniRule"/>
</dbReference>
<dbReference type="GO" id="GO:0000287">
    <property type="term" value="F:magnesium ion binding"/>
    <property type="evidence" value="ECO:0007669"/>
    <property type="project" value="UniProtKB-UniRule"/>
</dbReference>
<dbReference type="GO" id="GO:0006284">
    <property type="term" value="P:base-excision repair"/>
    <property type="evidence" value="ECO:0007669"/>
    <property type="project" value="UniProtKB-UniRule"/>
</dbReference>
<dbReference type="GO" id="GO:0043137">
    <property type="term" value="P:DNA replication, removal of RNA primer"/>
    <property type="evidence" value="ECO:0007669"/>
    <property type="project" value="UniProtKB-UniRule"/>
</dbReference>
<dbReference type="CDD" id="cd09907">
    <property type="entry name" value="H3TH_FEN1-Euk"/>
    <property type="match status" value="1"/>
</dbReference>
<dbReference type="CDD" id="cd09867">
    <property type="entry name" value="PIN_FEN1"/>
    <property type="match status" value="1"/>
</dbReference>
<dbReference type="FunFam" id="1.10.150.20:FF:000009">
    <property type="entry name" value="Flap endonuclease 1"/>
    <property type="match status" value="1"/>
</dbReference>
<dbReference type="FunFam" id="3.40.50.1010:FF:000003">
    <property type="entry name" value="Flap endonuclease 1"/>
    <property type="match status" value="1"/>
</dbReference>
<dbReference type="Gene3D" id="1.10.150.20">
    <property type="entry name" value="5' to 3' exonuclease, C-terminal subdomain"/>
    <property type="match status" value="1"/>
</dbReference>
<dbReference type="Gene3D" id="3.40.50.1010">
    <property type="entry name" value="5'-nuclease"/>
    <property type="match status" value="1"/>
</dbReference>
<dbReference type="HAMAP" id="MF_00614">
    <property type="entry name" value="Fen"/>
    <property type="match status" value="1"/>
</dbReference>
<dbReference type="InterPro" id="IPR036279">
    <property type="entry name" value="5-3_exonuclease_C_sf"/>
</dbReference>
<dbReference type="InterPro" id="IPR023426">
    <property type="entry name" value="Flap_endonuc"/>
</dbReference>
<dbReference type="InterPro" id="IPR008918">
    <property type="entry name" value="HhH2"/>
</dbReference>
<dbReference type="InterPro" id="IPR029060">
    <property type="entry name" value="PIN-like_dom_sf"/>
</dbReference>
<dbReference type="InterPro" id="IPR006086">
    <property type="entry name" value="XPG-I_dom"/>
</dbReference>
<dbReference type="InterPro" id="IPR006084">
    <property type="entry name" value="XPG/Rad2"/>
</dbReference>
<dbReference type="InterPro" id="IPR019974">
    <property type="entry name" value="XPG_CS"/>
</dbReference>
<dbReference type="InterPro" id="IPR006085">
    <property type="entry name" value="XPG_DNA_repair_N"/>
</dbReference>
<dbReference type="PANTHER" id="PTHR11081:SF9">
    <property type="entry name" value="FLAP ENDONUCLEASE 1"/>
    <property type="match status" value="1"/>
</dbReference>
<dbReference type="PANTHER" id="PTHR11081">
    <property type="entry name" value="FLAP ENDONUCLEASE FAMILY MEMBER"/>
    <property type="match status" value="1"/>
</dbReference>
<dbReference type="Pfam" id="PF00867">
    <property type="entry name" value="XPG_I"/>
    <property type="match status" value="1"/>
</dbReference>
<dbReference type="Pfam" id="PF00752">
    <property type="entry name" value="XPG_N"/>
    <property type="match status" value="1"/>
</dbReference>
<dbReference type="PRINTS" id="PR00853">
    <property type="entry name" value="XPGRADSUPER"/>
</dbReference>
<dbReference type="SMART" id="SM00279">
    <property type="entry name" value="HhH2"/>
    <property type="match status" value="1"/>
</dbReference>
<dbReference type="SMART" id="SM00484">
    <property type="entry name" value="XPGI"/>
    <property type="match status" value="1"/>
</dbReference>
<dbReference type="SMART" id="SM00485">
    <property type="entry name" value="XPGN"/>
    <property type="match status" value="1"/>
</dbReference>
<dbReference type="SUPFAM" id="SSF47807">
    <property type="entry name" value="5' to 3' exonuclease, C-terminal subdomain"/>
    <property type="match status" value="1"/>
</dbReference>
<dbReference type="SUPFAM" id="SSF88723">
    <property type="entry name" value="PIN domain-like"/>
    <property type="match status" value="1"/>
</dbReference>
<dbReference type="PROSITE" id="PS00841">
    <property type="entry name" value="XPG_1"/>
    <property type="match status" value="1"/>
</dbReference>
<dbReference type="PROSITE" id="PS00842">
    <property type="entry name" value="XPG_2"/>
    <property type="match status" value="1"/>
</dbReference>
<name>FEN1_ASPNC</name>
<reference key="1">
    <citation type="journal article" date="2007" name="Nat. Biotechnol.">
        <title>Genome sequencing and analysis of the versatile cell factory Aspergillus niger CBS 513.88.</title>
        <authorList>
            <person name="Pel H.J."/>
            <person name="de Winde J.H."/>
            <person name="Archer D.B."/>
            <person name="Dyer P.S."/>
            <person name="Hofmann G."/>
            <person name="Schaap P.J."/>
            <person name="Turner G."/>
            <person name="de Vries R.P."/>
            <person name="Albang R."/>
            <person name="Albermann K."/>
            <person name="Andersen M.R."/>
            <person name="Bendtsen J.D."/>
            <person name="Benen J.A.E."/>
            <person name="van den Berg M."/>
            <person name="Breestraat S."/>
            <person name="Caddick M.X."/>
            <person name="Contreras R."/>
            <person name="Cornell M."/>
            <person name="Coutinho P.M."/>
            <person name="Danchin E.G.J."/>
            <person name="Debets A.J.M."/>
            <person name="Dekker P."/>
            <person name="van Dijck P.W.M."/>
            <person name="van Dijk A."/>
            <person name="Dijkhuizen L."/>
            <person name="Driessen A.J.M."/>
            <person name="d'Enfert C."/>
            <person name="Geysens S."/>
            <person name="Goosen C."/>
            <person name="Groot G.S.P."/>
            <person name="de Groot P.W.J."/>
            <person name="Guillemette T."/>
            <person name="Henrissat B."/>
            <person name="Herweijer M."/>
            <person name="van den Hombergh J.P.T.W."/>
            <person name="van den Hondel C.A.M.J.J."/>
            <person name="van der Heijden R.T.J.M."/>
            <person name="van der Kaaij R.M."/>
            <person name="Klis F.M."/>
            <person name="Kools H.J."/>
            <person name="Kubicek C.P."/>
            <person name="van Kuyk P.A."/>
            <person name="Lauber J."/>
            <person name="Lu X."/>
            <person name="van der Maarel M.J.E.C."/>
            <person name="Meulenberg R."/>
            <person name="Menke H."/>
            <person name="Mortimer M.A."/>
            <person name="Nielsen J."/>
            <person name="Oliver S.G."/>
            <person name="Olsthoorn M."/>
            <person name="Pal K."/>
            <person name="van Peij N.N.M.E."/>
            <person name="Ram A.F.J."/>
            <person name="Rinas U."/>
            <person name="Roubos J.A."/>
            <person name="Sagt C.M.J."/>
            <person name="Schmoll M."/>
            <person name="Sun J."/>
            <person name="Ussery D."/>
            <person name="Varga J."/>
            <person name="Vervecken W."/>
            <person name="van de Vondervoort P.J.J."/>
            <person name="Wedler H."/>
            <person name="Woesten H.A.B."/>
            <person name="Zeng A.-P."/>
            <person name="van Ooyen A.J.J."/>
            <person name="Visser J."/>
            <person name="Stam H."/>
        </authorList>
    </citation>
    <scope>NUCLEOTIDE SEQUENCE [LARGE SCALE GENOMIC DNA]</scope>
    <source>
        <strain>ATCC MYA-4892 / CBS 513.88 / FGSC A1513</strain>
    </source>
</reference>
<keyword id="KW-0227">DNA damage</keyword>
<keyword id="KW-0234">DNA repair</keyword>
<keyword id="KW-0235">DNA replication</keyword>
<keyword id="KW-0255">Endonuclease</keyword>
<keyword id="KW-0269">Exonuclease</keyword>
<keyword id="KW-0378">Hydrolase</keyword>
<keyword id="KW-0460">Magnesium</keyword>
<keyword id="KW-0479">Metal-binding</keyword>
<keyword id="KW-0496">Mitochondrion</keyword>
<keyword id="KW-0540">Nuclease</keyword>
<keyword id="KW-0539">Nucleus</keyword>
<keyword id="KW-0597">Phosphoprotein</keyword>
<keyword id="KW-1185">Reference proteome</keyword>
<proteinExistence type="inferred from homology"/>
<comment type="function">
    <text evidence="1">Structure-specific nuclease with 5'-flap endonuclease and 5'-3' exonuclease activities involved in DNA replication and repair. During DNA replication, cleaves the 5'-overhanging flap structure that is generated by displacement synthesis when DNA polymerase encounters the 5'-end of a downstream Okazaki fragment. It enters the flap from the 5'-end and then tracks to cleave the flap base, leaving a nick for ligation. Also involved in the long patch base excision repair (LP-BER) pathway, by cleaving within the apurinic/apyrimidinic (AP) site-terminated flap. Acts as a genome stabilization factor that prevents flaps from equilibrating into structures that lead to duplications and deletions. Also possesses 5'-3' exonuclease activity on nicked or gapped double-stranded DNA, and exhibits RNase H activity. Also involved in replication and repair of rDNA and in repairing mitochondrial DNA.</text>
</comment>
<comment type="cofactor">
    <cofactor evidence="1">
        <name>Mg(2+)</name>
        <dbReference type="ChEBI" id="CHEBI:18420"/>
    </cofactor>
    <text evidence="1">Binds 2 magnesium ions per subunit. They probably participate in the reaction catalyzed by the enzyme. May bind an additional third magnesium ion after substrate binding.</text>
</comment>
<comment type="subunit">
    <text evidence="1">Interacts with PCNA. Three molecules of fen1 bind to one PCNA trimer with each molecule binding to one PCNA monomer. PCNA stimulates the nuclease activity without altering cleavage specificity.</text>
</comment>
<comment type="subcellular location">
    <subcellularLocation>
        <location evidence="1">Nucleus</location>
        <location evidence="1">Nucleolus</location>
    </subcellularLocation>
    <subcellularLocation>
        <location evidence="1">Nucleus</location>
        <location evidence="1">Nucleoplasm</location>
    </subcellularLocation>
    <subcellularLocation>
        <location evidence="1">Mitochondrion</location>
    </subcellularLocation>
    <text evidence="1">Resides mostly in the nucleoli and relocalizes to the nucleoplasm upon DNA damage.</text>
</comment>
<comment type="PTM">
    <text evidence="1">Phosphorylated. Phosphorylation upon DNA damage induces relocalization to the nuclear plasma.</text>
</comment>
<comment type="similarity">
    <text evidence="1">Belongs to the XPG/RAD2 endonuclease family. FEN1 subfamily.</text>
</comment>
<sequence>MGIKQLYQVISENAPDAIKAGDIKNHFGRKVAIDASMSIYSFLIAVRSEGQQLMSDTGETTSHLMGMFYRTLRMVDNGIKPLYVFDGAPPKLKSGELAKRFARKSEATEAHEEAKETGTAEDVEKFSRRTVRVTREHNAECKKLLKLMGIPYIDAPTEAEAQCAVLARAGKVYAAASEDMDTLCFETPILLRHLTFSEQRKEPIQEIHLNRALEGLGMDRKQFIDLCILLGCDYLEPIPKVGPNTALKLIRDHGSLEKVLEFMENDPKKKFVVPEDWPYEDARELFLNPDVRDANDPECDFKWEAPDVPGLVDFLVKDKGFNEDRVKNGAARLQKNLKSAQQSRLEGFFKPVARTDEEKASLKRKHDEKIQEQKKKKKEEAKAKKEAKSRPRGAG</sequence>
<feature type="chain" id="PRO_0000403564" description="Flap endonuclease 1">
    <location>
        <begin position="1"/>
        <end position="395"/>
    </location>
</feature>
<feature type="region of interest" description="N-domain">
    <location>
        <begin position="1"/>
        <end position="104"/>
    </location>
</feature>
<feature type="region of interest" description="I-domain">
    <location>
        <begin position="122"/>
        <end position="253"/>
    </location>
</feature>
<feature type="region of interest" description="Interaction with PCNA" evidence="1">
    <location>
        <begin position="341"/>
        <end position="349"/>
    </location>
</feature>
<feature type="region of interest" description="Disordered" evidence="2">
    <location>
        <begin position="344"/>
        <end position="395"/>
    </location>
</feature>
<feature type="compositionally biased region" description="Basic and acidic residues" evidence="2">
    <location>
        <begin position="353"/>
        <end position="389"/>
    </location>
</feature>
<feature type="binding site" evidence="1">
    <location>
        <position position="34"/>
    </location>
    <ligand>
        <name>Mg(2+)</name>
        <dbReference type="ChEBI" id="CHEBI:18420"/>
        <label>1</label>
    </ligand>
</feature>
<feature type="binding site" evidence="1">
    <location>
        <position position="47"/>
    </location>
    <ligand>
        <name>DNA</name>
        <dbReference type="ChEBI" id="CHEBI:16991"/>
    </ligand>
</feature>
<feature type="binding site" evidence="1">
    <location>
        <position position="70"/>
    </location>
    <ligand>
        <name>DNA</name>
        <dbReference type="ChEBI" id="CHEBI:16991"/>
    </ligand>
</feature>
<feature type="binding site" evidence="1">
    <location>
        <position position="86"/>
    </location>
    <ligand>
        <name>Mg(2+)</name>
        <dbReference type="ChEBI" id="CHEBI:18420"/>
        <label>1</label>
    </ligand>
</feature>
<feature type="binding site" evidence="1">
    <location>
        <position position="158"/>
    </location>
    <ligand>
        <name>DNA</name>
        <dbReference type="ChEBI" id="CHEBI:16991"/>
    </ligand>
</feature>
<feature type="binding site" evidence="1">
    <location>
        <position position="158"/>
    </location>
    <ligand>
        <name>Mg(2+)</name>
        <dbReference type="ChEBI" id="CHEBI:18420"/>
        <label>1</label>
    </ligand>
</feature>
<feature type="binding site" evidence="1">
    <location>
        <position position="160"/>
    </location>
    <ligand>
        <name>Mg(2+)</name>
        <dbReference type="ChEBI" id="CHEBI:18420"/>
        <label>1</label>
    </ligand>
</feature>
<feature type="binding site" evidence="1">
    <location>
        <position position="179"/>
    </location>
    <ligand>
        <name>Mg(2+)</name>
        <dbReference type="ChEBI" id="CHEBI:18420"/>
        <label>2</label>
    </ligand>
</feature>
<feature type="binding site" evidence="1">
    <location>
        <position position="181"/>
    </location>
    <ligand>
        <name>Mg(2+)</name>
        <dbReference type="ChEBI" id="CHEBI:18420"/>
        <label>2</label>
    </ligand>
</feature>
<feature type="binding site" evidence="1">
    <location>
        <position position="231"/>
    </location>
    <ligand>
        <name>DNA</name>
        <dbReference type="ChEBI" id="CHEBI:16991"/>
    </ligand>
</feature>
<feature type="binding site" evidence="1">
    <location>
        <position position="233"/>
    </location>
    <ligand>
        <name>DNA</name>
        <dbReference type="ChEBI" id="CHEBI:16991"/>
    </ligand>
</feature>
<feature type="binding site" evidence="1">
    <location>
        <position position="233"/>
    </location>
    <ligand>
        <name>Mg(2+)</name>
        <dbReference type="ChEBI" id="CHEBI:18420"/>
        <label>2</label>
    </ligand>
</feature>
<gene>
    <name type="primary">fen1</name>
    <name type="ORF">An11g10450</name>
</gene>
<accession>A5ABU3</accession>
<protein>
    <recommendedName>
        <fullName evidence="1">Flap endonuclease 1</fullName>
        <shortName evidence="1">FEN-1</shortName>
        <ecNumber evidence="1">3.1.-.-</ecNumber>
    </recommendedName>
    <alternativeName>
        <fullName evidence="1">Flap structure-specific endonuclease 1</fullName>
    </alternativeName>
</protein>
<evidence type="ECO:0000255" key="1">
    <source>
        <dbReference type="HAMAP-Rule" id="MF_03140"/>
    </source>
</evidence>
<evidence type="ECO:0000256" key="2">
    <source>
        <dbReference type="SAM" id="MobiDB-lite"/>
    </source>
</evidence>